<sequence>MSRVAKAPVSIPAGVEVTLNEQTLTVKGAKGSLTRVINNAVNVVIEDGVIKFLPVEGAVGAWAQAGTTRALVNNMVVGVSQGFERKLKLVGVGYRAKLVGADIDLTLGFSHPLVHKLPAGVTAECPSQTDIVLRGVDKQLIGQVAAEIRGYRPPEPYKGKGVRYDDEEVRRKEAKKK</sequence>
<accession>Q0I090</accession>
<feature type="chain" id="PRO_0000265297" description="Large ribosomal subunit protein uL6">
    <location>
        <begin position="1"/>
        <end position="177"/>
    </location>
</feature>
<feature type="region of interest" description="Disordered" evidence="2">
    <location>
        <begin position="152"/>
        <end position="177"/>
    </location>
</feature>
<feature type="compositionally biased region" description="Basic and acidic residues" evidence="2">
    <location>
        <begin position="152"/>
        <end position="171"/>
    </location>
</feature>
<proteinExistence type="inferred from homology"/>
<organism>
    <name type="scientific">Shewanella sp. (strain MR-7)</name>
    <dbReference type="NCBI Taxonomy" id="60481"/>
    <lineage>
        <taxon>Bacteria</taxon>
        <taxon>Pseudomonadati</taxon>
        <taxon>Pseudomonadota</taxon>
        <taxon>Gammaproteobacteria</taxon>
        <taxon>Alteromonadales</taxon>
        <taxon>Shewanellaceae</taxon>
        <taxon>Shewanella</taxon>
    </lineage>
</organism>
<dbReference type="EMBL" id="CP000444">
    <property type="protein sequence ID" value="ABI41215.1"/>
    <property type="molecule type" value="Genomic_DNA"/>
</dbReference>
<dbReference type="SMR" id="Q0I090"/>
<dbReference type="KEGG" id="shm:Shewmr7_0209"/>
<dbReference type="HOGENOM" id="CLU_065464_1_2_6"/>
<dbReference type="GO" id="GO:0022625">
    <property type="term" value="C:cytosolic large ribosomal subunit"/>
    <property type="evidence" value="ECO:0007669"/>
    <property type="project" value="TreeGrafter"/>
</dbReference>
<dbReference type="GO" id="GO:0019843">
    <property type="term" value="F:rRNA binding"/>
    <property type="evidence" value="ECO:0007669"/>
    <property type="project" value="UniProtKB-UniRule"/>
</dbReference>
<dbReference type="GO" id="GO:0003735">
    <property type="term" value="F:structural constituent of ribosome"/>
    <property type="evidence" value="ECO:0007669"/>
    <property type="project" value="InterPro"/>
</dbReference>
<dbReference type="GO" id="GO:0002181">
    <property type="term" value="P:cytoplasmic translation"/>
    <property type="evidence" value="ECO:0007669"/>
    <property type="project" value="TreeGrafter"/>
</dbReference>
<dbReference type="FunFam" id="3.90.930.12:FF:000001">
    <property type="entry name" value="50S ribosomal protein L6"/>
    <property type="match status" value="1"/>
</dbReference>
<dbReference type="FunFam" id="3.90.930.12:FF:000002">
    <property type="entry name" value="50S ribosomal protein L6"/>
    <property type="match status" value="1"/>
</dbReference>
<dbReference type="Gene3D" id="3.90.930.12">
    <property type="entry name" value="Ribosomal protein L6, alpha-beta domain"/>
    <property type="match status" value="2"/>
</dbReference>
<dbReference type="HAMAP" id="MF_01365_B">
    <property type="entry name" value="Ribosomal_uL6_B"/>
    <property type="match status" value="1"/>
</dbReference>
<dbReference type="InterPro" id="IPR000702">
    <property type="entry name" value="Ribosomal_uL6-like"/>
</dbReference>
<dbReference type="InterPro" id="IPR036789">
    <property type="entry name" value="Ribosomal_uL6-like_a/b-dom_sf"/>
</dbReference>
<dbReference type="InterPro" id="IPR020040">
    <property type="entry name" value="Ribosomal_uL6_a/b-dom"/>
</dbReference>
<dbReference type="InterPro" id="IPR019906">
    <property type="entry name" value="Ribosomal_uL6_bac-type"/>
</dbReference>
<dbReference type="InterPro" id="IPR002358">
    <property type="entry name" value="Ribosomal_uL6_CS"/>
</dbReference>
<dbReference type="NCBIfam" id="TIGR03654">
    <property type="entry name" value="L6_bact"/>
    <property type="match status" value="1"/>
</dbReference>
<dbReference type="PANTHER" id="PTHR11655">
    <property type="entry name" value="60S/50S RIBOSOMAL PROTEIN L6/L9"/>
    <property type="match status" value="1"/>
</dbReference>
<dbReference type="PANTHER" id="PTHR11655:SF14">
    <property type="entry name" value="LARGE RIBOSOMAL SUBUNIT PROTEIN UL6M"/>
    <property type="match status" value="1"/>
</dbReference>
<dbReference type="Pfam" id="PF00347">
    <property type="entry name" value="Ribosomal_L6"/>
    <property type="match status" value="2"/>
</dbReference>
<dbReference type="PIRSF" id="PIRSF002162">
    <property type="entry name" value="Ribosomal_L6"/>
    <property type="match status" value="1"/>
</dbReference>
<dbReference type="PRINTS" id="PR00059">
    <property type="entry name" value="RIBOSOMALL6"/>
</dbReference>
<dbReference type="SUPFAM" id="SSF56053">
    <property type="entry name" value="Ribosomal protein L6"/>
    <property type="match status" value="2"/>
</dbReference>
<dbReference type="PROSITE" id="PS00525">
    <property type="entry name" value="RIBOSOMAL_L6_1"/>
    <property type="match status" value="1"/>
</dbReference>
<name>RL6_SHESR</name>
<reference key="1">
    <citation type="submission" date="2006-08" db="EMBL/GenBank/DDBJ databases">
        <title>Complete sequence of chromosome 1 of Shewanella sp. MR-7.</title>
        <authorList>
            <person name="Copeland A."/>
            <person name="Lucas S."/>
            <person name="Lapidus A."/>
            <person name="Barry K."/>
            <person name="Detter J.C."/>
            <person name="Glavina del Rio T."/>
            <person name="Hammon N."/>
            <person name="Israni S."/>
            <person name="Dalin E."/>
            <person name="Tice H."/>
            <person name="Pitluck S."/>
            <person name="Kiss H."/>
            <person name="Brettin T."/>
            <person name="Bruce D."/>
            <person name="Han C."/>
            <person name="Tapia R."/>
            <person name="Gilna P."/>
            <person name="Schmutz J."/>
            <person name="Larimer F."/>
            <person name="Land M."/>
            <person name="Hauser L."/>
            <person name="Kyrpides N."/>
            <person name="Mikhailova N."/>
            <person name="Nealson K."/>
            <person name="Konstantinidis K."/>
            <person name="Klappenbach J."/>
            <person name="Tiedje J."/>
            <person name="Richardson P."/>
        </authorList>
    </citation>
    <scope>NUCLEOTIDE SEQUENCE [LARGE SCALE GENOMIC DNA]</scope>
    <source>
        <strain>MR-7</strain>
    </source>
</reference>
<gene>
    <name evidence="1" type="primary">rplF</name>
    <name type="ordered locus">Shewmr7_0209</name>
</gene>
<evidence type="ECO:0000255" key="1">
    <source>
        <dbReference type="HAMAP-Rule" id="MF_01365"/>
    </source>
</evidence>
<evidence type="ECO:0000256" key="2">
    <source>
        <dbReference type="SAM" id="MobiDB-lite"/>
    </source>
</evidence>
<evidence type="ECO:0000305" key="3"/>
<comment type="function">
    <text evidence="1">This protein binds to the 23S rRNA, and is important in its secondary structure. It is located near the subunit interface in the base of the L7/L12 stalk, and near the tRNA binding site of the peptidyltransferase center.</text>
</comment>
<comment type="subunit">
    <text evidence="1">Part of the 50S ribosomal subunit.</text>
</comment>
<comment type="similarity">
    <text evidence="1">Belongs to the universal ribosomal protein uL6 family.</text>
</comment>
<protein>
    <recommendedName>
        <fullName evidence="1">Large ribosomal subunit protein uL6</fullName>
    </recommendedName>
    <alternativeName>
        <fullName evidence="3">50S ribosomal protein L6</fullName>
    </alternativeName>
</protein>
<keyword id="KW-0687">Ribonucleoprotein</keyword>
<keyword id="KW-0689">Ribosomal protein</keyword>
<keyword id="KW-0694">RNA-binding</keyword>
<keyword id="KW-0699">rRNA-binding</keyword>